<reference key="1">
    <citation type="journal article" date="2010" name="J. Bacteriol.">
        <title>Whole genome sequences of two Xylella fastidiosa strains (M12 and M23) causing almond leaf scorch disease in California.</title>
        <authorList>
            <person name="Chen J."/>
            <person name="Xie G."/>
            <person name="Han S."/>
            <person name="Chertkov O."/>
            <person name="Sims D."/>
            <person name="Civerolo E.L."/>
        </authorList>
    </citation>
    <scope>NUCLEOTIDE SEQUENCE [LARGE SCALE GENOMIC DNA]</scope>
    <source>
        <strain>M23</strain>
    </source>
</reference>
<gene>
    <name evidence="1" type="primary">lifO</name>
    <name type="ordered locus">XfasM23_0463</name>
</gene>
<comment type="function">
    <text evidence="1">May be involved in the folding of the extracellular lipase during its passage through the periplasm.</text>
</comment>
<comment type="subcellular location">
    <subcellularLocation>
        <location evidence="1">Cell inner membrane</location>
        <topology evidence="1">Single-pass membrane protein</topology>
    </subcellularLocation>
</comment>
<comment type="similarity">
    <text evidence="1">Belongs to the lipase chaperone family.</text>
</comment>
<organism>
    <name type="scientific">Xylella fastidiosa (strain M23)</name>
    <dbReference type="NCBI Taxonomy" id="405441"/>
    <lineage>
        <taxon>Bacteria</taxon>
        <taxon>Pseudomonadati</taxon>
        <taxon>Pseudomonadota</taxon>
        <taxon>Gammaproteobacteria</taxon>
        <taxon>Lysobacterales</taxon>
        <taxon>Lysobacteraceae</taxon>
        <taxon>Xylella</taxon>
    </lineage>
</organism>
<feature type="chain" id="PRO_1000190852" description="Lipase chaperone">
    <location>
        <begin position="1"/>
        <end position="353"/>
    </location>
</feature>
<feature type="transmembrane region" description="Helical" evidence="1">
    <location>
        <begin position="12"/>
        <end position="32"/>
    </location>
</feature>
<proteinExistence type="inferred from homology"/>
<keyword id="KW-0997">Cell inner membrane</keyword>
<keyword id="KW-1003">Cell membrane</keyword>
<keyword id="KW-0143">Chaperone</keyword>
<keyword id="KW-0442">Lipid degradation</keyword>
<keyword id="KW-0443">Lipid metabolism</keyword>
<keyword id="KW-0472">Membrane</keyword>
<keyword id="KW-0812">Transmembrane</keyword>
<keyword id="KW-1133">Transmembrane helix</keyword>
<dbReference type="EMBL" id="CP001011">
    <property type="protein sequence ID" value="ACB91910.1"/>
    <property type="molecule type" value="Genomic_DNA"/>
</dbReference>
<dbReference type="RefSeq" id="WP_011097653.1">
    <property type="nucleotide sequence ID" value="NC_010577.1"/>
</dbReference>
<dbReference type="SMR" id="B2I8J9"/>
<dbReference type="KEGG" id="xfn:XfasM23_0463"/>
<dbReference type="HOGENOM" id="CLU_064928_1_0_6"/>
<dbReference type="Proteomes" id="UP000001698">
    <property type="component" value="Chromosome"/>
</dbReference>
<dbReference type="GO" id="GO:0005886">
    <property type="term" value="C:plasma membrane"/>
    <property type="evidence" value="ECO:0007669"/>
    <property type="project" value="UniProtKB-SubCell"/>
</dbReference>
<dbReference type="GO" id="GO:0051082">
    <property type="term" value="F:unfolded protein binding"/>
    <property type="evidence" value="ECO:0007669"/>
    <property type="project" value="UniProtKB-UniRule"/>
</dbReference>
<dbReference type="GO" id="GO:0016042">
    <property type="term" value="P:lipid catabolic process"/>
    <property type="evidence" value="ECO:0007669"/>
    <property type="project" value="UniProtKB-UniRule"/>
</dbReference>
<dbReference type="GO" id="GO:0006457">
    <property type="term" value="P:protein folding"/>
    <property type="evidence" value="ECO:0007669"/>
    <property type="project" value="UniProtKB-UniRule"/>
</dbReference>
<dbReference type="HAMAP" id="MF_00790">
    <property type="entry name" value="Lipase_chap"/>
    <property type="match status" value="1"/>
</dbReference>
<dbReference type="InterPro" id="IPR004961">
    <property type="entry name" value="Lipase_chaperone"/>
</dbReference>
<dbReference type="NCBIfam" id="NF002338">
    <property type="entry name" value="PRK01294.1-6"/>
    <property type="match status" value="1"/>
</dbReference>
<dbReference type="Pfam" id="PF03280">
    <property type="entry name" value="Lipase_chap"/>
    <property type="match status" value="1"/>
</dbReference>
<dbReference type="SUPFAM" id="SSF158855">
    <property type="entry name" value="Lipase chaperone-like"/>
    <property type="match status" value="1"/>
</dbReference>
<name>LIFO_XYLF2</name>
<sequence length="353" mass="39998">MIKKYSFVNHRIVLYLILGCVVVCGVWYSFDVRQAIDVGAVDLSLPQMSNNLLKEVAVGEGKTTNRLSRLPVDSTVPTVLPQSLAGSIAPPLPLDAYGHLARVSAVRDFFDYFLTAQNDLTPAALDEIVTHEIVKQLHGKSAQAEAQDVWTRYCAYFSQLVKLPDMGMVLGDKLDFVAVQRALDQRASLAVRTLGDWSEPFFGAEQQRQRYDLERLKIADDQALTDEQKKKRLVALEQKLPSKVQEERIKIQQQQDAVVKIIQLQKDEVTPDGIRLQVVGLLGPEVAYRVAEIRRQDEIWQEKYKHYAAQRAQRAQIEAQQLEPKEHDVQVENLRQRIFTKPGEALRAASLDQ</sequence>
<evidence type="ECO:0000255" key="1">
    <source>
        <dbReference type="HAMAP-Rule" id="MF_00790"/>
    </source>
</evidence>
<accession>B2I8J9</accession>
<protein>
    <recommendedName>
        <fullName evidence="1">Lipase chaperone</fullName>
    </recommendedName>
    <alternativeName>
        <fullName evidence="1">Lipase activator protein</fullName>
    </alternativeName>
    <alternativeName>
        <fullName evidence="1">Lipase foldase</fullName>
    </alternativeName>
    <alternativeName>
        <fullName evidence="1">Lipase helper protein</fullName>
    </alternativeName>
    <alternativeName>
        <fullName evidence="1">Lipase modulator</fullName>
    </alternativeName>
</protein>